<organism>
    <name type="scientific">Oryza nivara</name>
    <name type="common">Indian wild rice</name>
    <name type="synonym">Oryza sativa f. spontanea</name>
    <dbReference type="NCBI Taxonomy" id="4536"/>
    <lineage>
        <taxon>Eukaryota</taxon>
        <taxon>Viridiplantae</taxon>
        <taxon>Streptophyta</taxon>
        <taxon>Embryophyta</taxon>
        <taxon>Tracheophyta</taxon>
        <taxon>Spermatophyta</taxon>
        <taxon>Magnoliopsida</taxon>
        <taxon>Liliopsida</taxon>
        <taxon>Poales</taxon>
        <taxon>Poaceae</taxon>
        <taxon>BOP clade</taxon>
        <taxon>Oryzoideae</taxon>
        <taxon>Oryzeae</taxon>
        <taxon>Oryzinae</taxon>
        <taxon>Oryza</taxon>
    </lineage>
</organism>
<proteinExistence type="inferred from homology"/>
<name>PSBT_ORYNI</name>
<gene>
    <name evidence="1" type="primary">psbT</name>
</gene>
<evidence type="ECO:0000255" key="1">
    <source>
        <dbReference type="HAMAP-Rule" id="MF_00808"/>
    </source>
</evidence>
<evidence type="ECO:0000312" key="2">
    <source>
        <dbReference type="Proteomes" id="UP000006591"/>
    </source>
</evidence>
<accession>Q6ENE7</accession>
<dbReference type="EMBL" id="AP006728">
    <property type="protein sequence ID" value="BAD26805.1"/>
    <property type="molecule type" value="Genomic_DNA"/>
</dbReference>
<dbReference type="RefSeq" id="YP_052776.1">
    <property type="nucleotide sequence ID" value="NC_005973.1"/>
</dbReference>
<dbReference type="SMR" id="Q6ENE7"/>
<dbReference type="STRING" id="4536.Q6ENE7"/>
<dbReference type="GeneID" id="2885892"/>
<dbReference type="Proteomes" id="UP000006591">
    <property type="component" value="Chloroplast"/>
</dbReference>
<dbReference type="GO" id="GO:0009535">
    <property type="term" value="C:chloroplast thylakoid membrane"/>
    <property type="evidence" value="ECO:0007669"/>
    <property type="project" value="UniProtKB-SubCell"/>
</dbReference>
<dbReference type="GO" id="GO:0009539">
    <property type="term" value="C:photosystem II reaction center"/>
    <property type="evidence" value="ECO:0007669"/>
    <property type="project" value="InterPro"/>
</dbReference>
<dbReference type="GO" id="GO:0009536">
    <property type="term" value="C:plastid"/>
    <property type="evidence" value="ECO:0000305"/>
    <property type="project" value="Gramene"/>
</dbReference>
<dbReference type="GO" id="GO:0015979">
    <property type="term" value="P:photosynthesis"/>
    <property type="evidence" value="ECO:0007669"/>
    <property type="project" value="UniProtKB-UniRule"/>
</dbReference>
<dbReference type="HAMAP" id="MF_00808">
    <property type="entry name" value="PSII_PsbT"/>
    <property type="match status" value="1"/>
</dbReference>
<dbReference type="InterPro" id="IPR001743">
    <property type="entry name" value="PSII_PsbT"/>
</dbReference>
<dbReference type="InterPro" id="IPR037268">
    <property type="entry name" value="PSII_PsbT_sf"/>
</dbReference>
<dbReference type="PANTHER" id="PTHR36411">
    <property type="match status" value="1"/>
</dbReference>
<dbReference type="PANTHER" id="PTHR36411:SF2">
    <property type="entry name" value="PHOTOSYSTEM II REACTION CENTER PROTEIN T"/>
    <property type="match status" value="1"/>
</dbReference>
<dbReference type="Pfam" id="PF01405">
    <property type="entry name" value="PsbT"/>
    <property type="match status" value="1"/>
</dbReference>
<dbReference type="SUPFAM" id="SSF161029">
    <property type="entry name" value="Photosystem II reaction center protein T, PsbT"/>
    <property type="match status" value="1"/>
</dbReference>
<keyword id="KW-0150">Chloroplast</keyword>
<keyword id="KW-0472">Membrane</keyword>
<keyword id="KW-0602">Photosynthesis</keyword>
<keyword id="KW-0604">Photosystem II</keyword>
<keyword id="KW-0934">Plastid</keyword>
<keyword id="KW-1185">Reference proteome</keyword>
<keyword id="KW-0793">Thylakoid</keyword>
<keyword id="KW-0812">Transmembrane</keyword>
<keyword id="KW-1133">Transmembrane helix</keyword>
<geneLocation type="chloroplast"/>
<comment type="function">
    <text evidence="1">Found at the monomer-monomer interface of the photosystem II (PS II) dimer, plays a role in assembly and dimerization of PSII. PSII is a light-driven water plastoquinone oxidoreductase, using light energy to abstract electrons from H(2)O, generating a proton gradient subsequently used for ATP formation.</text>
</comment>
<comment type="subunit">
    <text evidence="1">PSII is composed of 1 copy each of membrane proteins PsbA, PsbB, PsbC, PsbD, PsbE, PsbF, PsbH, PsbI, PsbJ, PsbK, PsbL, PsbM, PsbT, PsbY, PsbZ, Psb30/Ycf12, at least 3 peripheral proteins of the oxygen-evolving complex and a large number of cofactors. It forms dimeric complexes.</text>
</comment>
<comment type="subcellular location">
    <subcellularLocation>
        <location evidence="1">Plastid</location>
        <location evidence="1">Chloroplast thylakoid membrane</location>
        <topology evidence="1">Single-pass membrane protein</topology>
    </subcellularLocation>
</comment>
<comment type="similarity">
    <text evidence="1">Belongs to the PsbT family.</text>
</comment>
<reference key="1">
    <citation type="journal article" date="2004" name="Gene">
        <title>The complete nucleotide sequence of wild rice (Oryza nivara) chloroplast genome: first genome wide comparative sequence analysis of wild and cultivated rice.</title>
        <authorList>
            <person name="Masood M.S."/>
            <person name="Nishikawa T."/>
            <person name="Fukuoka S."/>
            <person name="Njenga P.K."/>
            <person name="Tsudzuki T."/>
            <person name="Kadowaki K."/>
        </authorList>
    </citation>
    <scope>NUCLEOTIDE SEQUENCE [LARGE SCALE GENOMIC DNA]</scope>
    <source>
        <strain evidence="2">cv. SL10</strain>
    </source>
</reference>
<sequence>MEALVYTFLLVSTLGIIFFAIFFREPPKVPTKKVK</sequence>
<feature type="chain" id="PRO_0000217962" description="Photosystem II reaction center protein T">
    <location>
        <begin position="1"/>
        <end position="35"/>
    </location>
</feature>
<feature type="transmembrane region" description="Helical" evidence="1">
    <location>
        <begin position="3"/>
        <end position="23"/>
    </location>
</feature>
<protein>
    <recommendedName>
        <fullName evidence="1">Photosystem II reaction center protein T</fullName>
        <shortName evidence="1">PSII-T</shortName>
    </recommendedName>
</protein>